<organism>
    <name type="scientific">Physcomitrium patens</name>
    <name type="common">Spreading-leaved earth moss</name>
    <name type="synonym">Physcomitrella patens</name>
    <dbReference type="NCBI Taxonomy" id="3218"/>
    <lineage>
        <taxon>Eukaryota</taxon>
        <taxon>Viridiplantae</taxon>
        <taxon>Streptophyta</taxon>
        <taxon>Embryophyta</taxon>
        <taxon>Bryophyta</taxon>
        <taxon>Bryophytina</taxon>
        <taxon>Bryopsida</taxon>
        <taxon>Funariidae</taxon>
        <taxon>Funariales</taxon>
        <taxon>Funariaceae</taxon>
        <taxon>Physcomitrium</taxon>
    </lineage>
</organism>
<dbReference type="EMBL" id="FC422259">
    <property type="status" value="NOT_ANNOTATED_CDS"/>
    <property type="molecule type" value="mRNA"/>
</dbReference>
<dbReference type="EMBL" id="DS545268">
    <property type="protein sequence ID" value="EDQ51285.1"/>
    <property type="molecule type" value="Genomic_DNA"/>
</dbReference>
<dbReference type="RefSeq" id="XP_001783888.1">
    <property type="nucleotide sequence ID" value="XM_001783836.1"/>
</dbReference>
<dbReference type="FunCoup" id="A9TZ63">
    <property type="interactions" value="255"/>
</dbReference>
<dbReference type="PaxDb" id="3218-PP1S381_30V6.2"/>
<dbReference type="EnsemblPlants" id="Pp3c10_17030V3.1">
    <property type="protein sequence ID" value="Pp3c10_17030V3.1"/>
    <property type="gene ID" value="Pp3c10_17030"/>
</dbReference>
<dbReference type="EnsemblPlants" id="Pp3c10_17030V3.2">
    <property type="protein sequence ID" value="Pp3c10_17030V3.2"/>
    <property type="gene ID" value="Pp3c10_17030"/>
</dbReference>
<dbReference type="EnsemblPlants" id="Pp3c10_17030V3.3">
    <property type="protein sequence ID" value="Pp3c10_17030V3.3"/>
    <property type="gene ID" value="Pp3c10_17030"/>
</dbReference>
<dbReference type="EnsemblPlants" id="Pp3c10_17030V3.4">
    <property type="protein sequence ID" value="Pp3c10_17030V3.4"/>
    <property type="gene ID" value="Pp3c10_17030"/>
</dbReference>
<dbReference type="Gramene" id="Pp3c10_17030V3.1">
    <property type="protein sequence ID" value="Pp3c10_17030V3.1"/>
    <property type="gene ID" value="Pp3c10_17030"/>
</dbReference>
<dbReference type="Gramene" id="Pp3c10_17030V3.2">
    <property type="protein sequence ID" value="Pp3c10_17030V3.2"/>
    <property type="gene ID" value="Pp3c10_17030"/>
</dbReference>
<dbReference type="Gramene" id="Pp3c10_17030V3.3">
    <property type="protein sequence ID" value="Pp3c10_17030V3.3"/>
    <property type="gene ID" value="Pp3c10_17030"/>
</dbReference>
<dbReference type="Gramene" id="Pp3c10_17030V3.4">
    <property type="protein sequence ID" value="Pp3c10_17030V3.4"/>
    <property type="gene ID" value="Pp3c10_17030"/>
</dbReference>
<dbReference type="eggNOG" id="ENOG502RXTK">
    <property type="taxonomic scope" value="Eukaryota"/>
</dbReference>
<dbReference type="HOGENOM" id="CLU_066104_3_0_1"/>
<dbReference type="InParanoid" id="A9TZ63"/>
<dbReference type="OMA" id="PKFCDQI"/>
<dbReference type="OrthoDB" id="1906221at2759"/>
<dbReference type="Proteomes" id="UP000006727">
    <property type="component" value="Chromosome 10"/>
</dbReference>
<dbReference type="GO" id="GO:0005886">
    <property type="term" value="C:plasma membrane"/>
    <property type="evidence" value="ECO:0007669"/>
    <property type="project" value="UniProtKB-SubCell"/>
</dbReference>
<dbReference type="InterPro" id="IPR006459">
    <property type="entry name" value="CASP/CASPL"/>
</dbReference>
<dbReference type="InterPro" id="IPR006702">
    <property type="entry name" value="CASP_dom"/>
</dbReference>
<dbReference type="NCBIfam" id="TIGR01569">
    <property type="entry name" value="A_tha_TIGR01569"/>
    <property type="match status" value="1"/>
</dbReference>
<dbReference type="PANTHER" id="PTHR33573:SF47">
    <property type="entry name" value="CASP-LIKE PROTEIN 1U1"/>
    <property type="match status" value="1"/>
</dbReference>
<dbReference type="PANTHER" id="PTHR33573">
    <property type="entry name" value="CASP-LIKE PROTEIN 4A4"/>
    <property type="match status" value="1"/>
</dbReference>
<dbReference type="Pfam" id="PF04535">
    <property type="entry name" value="CASP_dom"/>
    <property type="match status" value="1"/>
</dbReference>
<proteinExistence type="evidence at transcript level"/>
<sequence length="198" mass="21774">MSDTPVVVIPRKGYVDGHHGYHHSYHSGLNLLLRLLQAFATAAAVIVMLLATQTEFTRYGEVRGRWRDYPAYKWFIIANAVVFVYALLATLVACCALIARRGPLSYSPSAWLTFLLDFVAASALMSAASAALAVALIARNGQNLQGQHYWPTFCNYVTRFCDYAQGAIIASFCGFGLLALSTLLAASALHHLAWHRLH</sequence>
<accession>A9TZ63</accession>
<reference key="1">
    <citation type="submission" date="2007-12" db="EMBL/GenBank/DDBJ databases">
        <title>DOE joint genome institute Physcomitrella patens EST project.</title>
        <authorList>
            <person name="Richardson P."/>
            <person name="Lucas S."/>
            <person name="Rokhsar D."/>
            <person name="Wang M."/>
            <person name="Lindquist E.A."/>
        </authorList>
    </citation>
    <scope>NUCLEOTIDE SEQUENCE [LARGE SCALE MRNA]</scope>
    <source>
        <strain>cv. Villersexel 2003</strain>
        <tissue>Protonema</tissue>
    </source>
</reference>
<reference key="2">
    <citation type="journal article" date="2008" name="Science">
        <title>The Physcomitrella genome reveals evolutionary insights into the conquest of land by plants.</title>
        <authorList>
            <person name="Rensing S.A."/>
            <person name="Lang D."/>
            <person name="Zimmer A.D."/>
            <person name="Terry A."/>
            <person name="Salamov A."/>
            <person name="Shapiro H."/>
            <person name="Nishiyama T."/>
            <person name="Perroud P.-F."/>
            <person name="Lindquist E.A."/>
            <person name="Kamisugi Y."/>
            <person name="Tanahashi T."/>
            <person name="Sakakibara K."/>
            <person name="Fujita T."/>
            <person name="Oishi K."/>
            <person name="Shin-I T."/>
            <person name="Kuroki Y."/>
            <person name="Toyoda A."/>
            <person name="Suzuki Y."/>
            <person name="Hashimoto S.-I."/>
            <person name="Yamaguchi K."/>
            <person name="Sugano S."/>
            <person name="Kohara Y."/>
            <person name="Fujiyama A."/>
            <person name="Anterola A."/>
            <person name="Aoki S."/>
            <person name="Ashton N."/>
            <person name="Barbazuk W.B."/>
            <person name="Barker E."/>
            <person name="Bennetzen J.L."/>
            <person name="Blankenship R."/>
            <person name="Cho S.H."/>
            <person name="Dutcher S.K."/>
            <person name="Estelle M."/>
            <person name="Fawcett J.A."/>
            <person name="Gundlach H."/>
            <person name="Hanada K."/>
            <person name="Heyl A."/>
            <person name="Hicks K.A."/>
            <person name="Hughes J."/>
            <person name="Lohr M."/>
            <person name="Mayer K."/>
            <person name="Melkozernov A."/>
            <person name="Murata T."/>
            <person name="Nelson D.R."/>
            <person name="Pils B."/>
            <person name="Prigge M."/>
            <person name="Reiss B."/>
            <person name="Renner T."/>
            <person name="Rombauts S."/>
            <person name="Rushton P.J."/>
            <person name="Sanderfoot A."/>
            <person name="Schween G."/>
            <person name="Shiu S.-H."/>
            <person name="Stueber K."/>
            <person name="Theodoulou F.L."/>
            <person name="Tu H."/>
            <person name="Van de Peer Y."/>
            <person name="Verrier P.J."/>
            <person name="Waters E."/>
            <person name="Wood A."/>
            <person name="Yang L."/>
            <person name="Cove D."/>
            <person name="Cuming A.C."/>
            <person name="Hasebe M."/>
            <person name="Lucas S."/>
            <person name="Mishler B.D."/>
            <person name="Reski R."/>
            <person name="Grigoriev I.V."/>
            <person name="Quatrano R.S."/>
            <person name="Boore J.L."/>
        </authorList>
    </citation>
    <scope>NUCLEOTIDE SEQUENCE [LARGE SCALE GENOMIC DNA]</scope>
    <source>
        <strain>cv. Gransden 2004</strain>
    </source>
</reference>
<reference key="3">
    <citation type="journal article" date="2014" name="Plant Physiol.">
        <title>Functional and evolutionary analysis of the CASPARIAN STRIP MEMBRANE DOMAIN PROTEIN family.</title>
        <authorList>
            <person name="Roppolo D."/>
            <person name="Boeckmann B."/>
            <person name="Pfister A."/>
            <person name="Boutet E."/>
            <person name="Rubio M.C."/>
            <person name="Denervaud-Tendon V."/>
            <person name="Vermeer J.E."/>
            <person name="Gheyselinck J."/>
            <person name="Xenarios I."/>
            <person name="Geldner N."/>
        </authorList>
    </citation>
    <scope>GENE FAMILY</scope>
    <scope>NOMENCLATURE</scope>
</reference>
<evidence type="ECO:0000250" key="1"/>
<evidence type="ECO:0000255" key="2"/>
<evidence type="ECO:0000305" key="3"/>
<comment type="subunit">
    <text evidence="1">Homodimer and heterodimers.</text>
</comment>
<comment type="subcellular location">
    <subcellularLocation>
        <location evidence="1">Cell membrane</location>
        <topology evidence="1">Multi-pass membrane protein</topology>
    </subcellularLocation>
</comment>
<comment type="similarity">
    <text evidence="3">Belongs to the Casparian strip membrane proteins (CASP) family.</text>
</comment>
<keyword id="KW-1003">Cell membrane</keyword>
<keyword id="KW-0472">Membrane</keyword>
<keyword id="KW-1185">Reference proteome</keyword>
<keyword id="KW-0812">Transmembrane</keyword>
<keyword id="KW-1133">Transmembrane helix</keyword>
<feature type="chain" id="PRO_0000370727" description="CASP-like protein 1U1">
    <location>
        <begin position="1"/>
        <end position="198"/>
    </location>
</feature>
<feature type="topological domain" description="Cytoplasmic" evidence="2">
    <location>
        <begin position="1"/>
        <end position="30"/>
    </location>
</feature>
<feature type="transmembrane region" description="Helical" evidence="2">
    <location>
        <begin position="31"/>
        <end position="51"/>
    </location>
</feature>
<feature type="topological domain" description="Extracellular" evidence="2">
    <location>
        <begin position="52"/>
        <end position="73"/>
    </location>
</feature>
<feature type="transmembrane region" description="Helical" evidence="2">
    <location>
        <begin position="74"/>
        <end position="94"/>
    </location>
</feature>
<feature type="topological domain" description="Cytoplasmic" evidence="2">
    <location>
        <begin position="95"/>
        <end position="117"/>
    </location>
</feature>
<feature type="transmembrane region" description="Helical" evidence="2">
    <location>
        <begin position="118"/>
        <end position="138"/>
    </location>
</feature>
<feature type="topological domain" description="Extracellular" evidence="2">
    <location>
        <begin position="139"/>
        <end position="165"/>
    </location>
</feature>
<feature type="transmembrane region" description="Helical" evidence="2">
    <location>
        <begin position="166"/>
        <end position="186"/>
    </location>
</feature>
<feature type="topological domain" description="Cytoplasmic" evidence="2">
    <location>
        <begin position="187"/>
        <end position="198"/>
    </location>
</feature>
<gene>
    <name type="ORF">PHYPADRAFT_109055</name>
</gene>
<name>CSPL4_PHYPA</name>
<protein>
    <recommendedName>
        <fullName>CASP-like protein 1U1</fullName>
        <shortName>PpCASPL1U1</shortName>
    </recommendedName>
</protein>